<keyword id="KW-0004">4Fe-4S</keyword>
<keyword id="KW-0408">Iron</keyword>
<keyword id="KW-0411">Iron-sulfur</keyword>
<keyword id="KW-0456">Lyase</keyword>
<keyword id="KW-0460">Magnesium</keyword>
<keyword id="KW-0479">Metal-binding</keyword>
<keyword id="KW-0671">Queuosine biosynthesis</keyword>
<keyword id="KW-1185">Reference proteome</keyword>
<keyword id="KW-0949">S-adenosyl-L-methionine</keyword>
<name>QUEE_GEOSL</name>
<gene>
    <name evidence="1" type="primary">queE</name>
    <name type="ordered locus">GSU1721</name>
</gene>
<accession>Q74CF3</accession>
<dbReference type="EC" id="4.3.99.3" evidence="1"/>
<dbReference type="EMBL" id="AE017180">
    <property type="protein sequence ID" value="AAR35098.1"/>
    <property type="molecule type" value="Genomic_DNA"/>
</dbReference>
<dbReference type="RefSeq" id="NP_952771.1">
    <property type="nucleotide sequence ID" value="NC_002939.5"/>
</dbReference>
<dbReference type="RefSeq" id="WP_010942366.1">
    <property type="nucleotide sequence ID" value="NC_002939.5"/>
</dbReference>
<dbReference type="SMR" id="Q74CF3"/>
<dbReference type="STRING" id="243231.GSU1721"/>
<dbReference type="DNASU" id="2687051"/>
<dbReference type="EnsemblBacteria" id="AAR35098">
    <property type="protein sequence ID" value="AAR35098"/>
    <property type="gene ID" value="GSU1721"/>
</dbReference>
<dbReference type="KEGG" id="gsu:GSU1721"/>
<dbReference type="PATRIC" id="fig|243231.5.peg.1762"/>
<dbReference type="eggNOG" id="COG0602">
    <property type="taxonomic scope" value="Bacteria"/>
</dbReference>
<dbReference type="HOGENOM" id="CLU_066739_1_0_7"/>
<dbReference type="InParanoid" id="Q74CF3"/>
<dbReference type="OrthoDB" id="9792276at2"/>
<dbReference type="UniPathway" id="UPA00391"/>
<dbReference type="Proteomes" id="UP000000577">
    <property type="component" value="Chromosome"/>
</dbReference>
<dbReference type="GO" id="GO:0051539">
    <property type="term" value="F:4 iron, 4 sulfur cluster binding"/>
    <property type="evidence" value="ECO:0007669"/>
    <property type="project" value="UniProtKB-UniRule"/>
</dbReference>
<dbReference type="GO" id="GO:0016840">
    <property type="term" value="F:carbon-nitrogen lyase activity"/>
    <property type="evidence" value="ECO:0007669"/>
    <property type="project" value="UniProtKB-UniRule"/>
</dbReference>
<dbReference type="GO" id="GO:0000287">
    <property type="term" value="F:magnesium ion binding"/>
    <property type="evidence" value="ECO:0007669"/>
    <property type="project" value="UniProtKB-UniRule"/>
</dbReference>
<dbReference type="GO" id="GO:1904047">
    <property type="term" value="F:S-adenosyl-L-methionine binding"/>
    <property type="evidence" value="ECO:0007669"/>
    <property type="project" value="UniProtKB-UniRule"/>
</dbReference>
<dbReference type="GO" id="GO:0008616">
    <property type="term" value="P:queuosine biosynthetic process"/>
    <property type="evidence" value="ECO:0007669"/>
    <property type="project" value="UniProtKB-UniRule"/>
</dbReference>
<dbReference type="CDD" id="cd01335">
    <property type="entry name" value="Radical_SAM"/>
    <property type="match status" value="1"/>
</dbReference>
<dbReference type="Gene3D" id="3.20.20.70">
    <property type="entry name" value="Aldolase class I"/>
    <property type="match status" value="1"/>
</dbReference>
<dbReference type="HAMAP" id="MF_00917">
    <property type="entry name" value="QueE"/>
    <property type="match status" value="1"/>
</dbReference>
<dbReference type="InterPro" id="IPR024924">
    <property type="entry name" value="7-CO-7-deazaguanine_synth-like"/>
</dbReference>
<dbReference type="InterPro" id="IPR013785">
    <property type="entry name" value="Aldolase_TIM"/>
</dbReference>
<dbReference type="InterPro" id="IPR007197">
    <property type="entry name" value="rSAM"/>
</dbReference>
<dbReference type="PANTHER" id="PTHR42836">
    <property type="entry name" value="7-CARBOXY-7-DEAZAGUANINE SYNTHASE"/>
    <property type="match status" value="1"/>
</dbReference>
<dbReference type="PANTHER" id="PTHR42836:SF1">
    <property type="entry name" value="7-CARBOXY-7-DEAZAGUANINE SYNTHASE"/>
    <property type="match status" value="1"/>
</dbReference>
<dbReference type="Pfam" id="PF04055">
    <property type="entry name" value="Radical_SAM"/>
    <property type="match status" value="1"/>
</dbReference>
<dbReference type="SFLD" id="SFLDS00029">
    <property type="entry name" value="Radical_SAM"/>
    <property type="match status" value="1"/>
</dbReference>
<dbReference type="SUPFAM" id="SSF102114">
    <property type="entry name" value="Radical SAM enzymes"/>
    <property type="match status" value="1"/>
</dbReference>
<dbReference type="PROSITE" id="PS51918">
    <property type="entry name" value="RADICAL_SAM"/>
    <property type="match status" value="1"/>
</dbReference>
<protein>
    <recommendedName>
        <fullName evidence="1">7-carboxy-7-deazaguanine synthase</fullName>
        <shortName evidence="1">CDG synthase</shortName>
        <ecNumber evidence="1">4.3.99.3</ecNumber>
    </recommendedName>
    <alternativeName>
        <fullName evidence="1">Queuosine biosynthesis protein QueE</fullName>
    </alternativeName>
</protein>
<evidence type="ECO:0000255" key="1">
    <source>
        <dbReference type="HAMAP-Rule" id="MF_00917"/>
    </source>
</evidence>
<evidence type="ECO:0000255" key="2">
    <source>
        <dbReference type="PROSITE-ProRule" id="PRU01266"/>
    </source>
</evidence>
<comment type="function">
    <text evidence="1">Catalyzes the complex heterocyclic radical-mediated conversion of 6-carboxy-5,6,7,8-tetrahydropterin (CPH4) to 7-carboxy-7-deazaguanine (CDG), a step common to the biosynthetic pathways of all 7-deazapurine-containing compounds.</text>
</comment>
<comment type="catalytic activity">
    <reaction evidence="1">
        <text>6-carboxy-5,6,7,8-tetrahydropterin + H(+) = 7-carboxy-7-deazaguanine + NH4(+)</text>
        <dbReference type="Rhea" id="RHEA:27974"/>
        <dbReference type="ChEBI" id="CHEBI:15378"/>
        <dbReference type="ChEBI" id="CHEBI:28938"/>
        <dbReference type="ChEBI" id="CHEBI:61032"/>
        <dbReference type="ChEBI" id="CHEBI:61036"/>
        <dbReference type="EC" id="4.3.99.3"/>
    </reaction>
</comment>
<comment type="cofactor">
    <cofactor evidence="1">
        <name>[4Fe-4S] cluster</name>
        <dbReference type="ChEBI" id="CHEBI:49883"/>
    </cofactor>
    <text evidence="1">Binds 1 [4Fe-4S] cluster. The cluster is coordinated with 3 cysteines and an exchangeable S-adenosyl-L-methionine.</text>
</comment>
<comment type="cofactor">
    <cofactor evidence="1">
        <name>S-adenosyl-L-methionine</name>
        <dbReference type="ChEBI" id="CHEBI:59789"/>
    </cofactor>
    <text evidence="1">Binds 1 S-adenosyl-L-methionine per subunit.</text>
</comment>
<comment type="cofactor">
    <cofactor evidence="1">
        <name>Mg(2+)</name>
        <dbReference type="ChEBI" id="CHEBI:18420"/>
    </cofactor>
</comment>
<comment type="pathway">
    <text evidence="1">Purine metabolism; 7-cyano-7-deazaguanine biosynthesis.</text>
</comment>
<comment type="subunit">
    <text evidence="1">Homodimer.</text>
</comment>
<comment type="similarity">
    <text evidence="1">Belongs to the radical SAM superfamily. 7-carboxy-7-deazaguanine synthase family.</text>
</comment>
<proteinExistence type="inferred from homology"/>
<reference key="1">
    <citation type="journal article" date="2003" name="Science">
        <title>Genome of Geobacter sulfurreducens: metal reduction in subsurface environments.</title>
        <authorList>
            <person name="Methe B.A."/>
            <person name="Nelson K.E."/>
            <person name="Eisen J.A."/>
            <person name="Paulsen I.T."/>
            <person name="Nelson W.C."/>
            <person name="Heidelberg J.F."/>
            <person name="Wu D."/>
            <person name="Wu M."/>
            <person name="Ward N.L."/>
            <person name="Beanan M.J."/>
            <person name="Dodson R.J."/>
            <person name="Madupu R."/>
            <person name="Brinkac L.M."/>
            <person name="Daugherty S.C."/>
            <person name="DeBoy R.T."/>
            <person name="Durkin A.S."/>
            <person name="Gwinn M.L."/>
            <person name="Kolonay J.F."/>
            <person name="Sullivan S.A."/>
            <person name="Haft D.H."/>
            <person name="Selengut J."/>
            <person name="Davidsen T.M."/>
            <person name="Zafar N."/>
            <person name="White O."/>
            <person name="Tran B."/>
            <person name="Romero C."/>
            <person name="Forberger H.A."/>
            <person name="Weidman J.F."/>
            <person name="Khouri H.M."/>
            <person name="Feldblyum T.V."/>
            <person name="Utterback T.R."/>
            <person name="Van Aken S.E."/>
            <person name="Lovley D.R."/>
            <person name="Fraser C.M."/>
        </authorList>
    </citation>
    <scope>NUCLEOTIDE SEQUENCE [LARGE SCALE GENOMIC DNA]</scope>
    <source>
        <strain>ATCC 51573 / DSM 12127 / PCA</strain>
    </source>
</reference>
<organism>
    <name type="scientific">Geobacter sulfurreducens (strain ATCC 51573 / DSM 12127 / PCA)</name>
    <dbReference type="NCBI Taxonomy" id="243231"/>
    <lineage>
        <taxon>Bacteria</taxon>
        <taxon>Pseudomonadati</taxon>
        <taxon>Thermodesulfobacteriota</taxon>
        <taxon>Desulfuromonadia</taxon>
        <taxon>Geobacterales</taxon>
        <taxon>Geobacteraceae</taxon>
        <taxon>Geobacter</taxon>
    </lineage>
</organism>
<feature type="chain" id="PRO_0000416205" description="7-carboxy-7-deazaguanine synthase">
    <location>
        <begin position="1"/>
        <end position="250"/>
    </location>
</feature>
<feature type="domain" description="Radical SAM core" evidence="2">
    <location>
        <begin position="21"/>
        <end position="250"/>
    </location>
</feature>
<feature type="binding site" evidence="1">
    <location>
        <begin position="15"/>
        <end position="17"/>
    </location>
    <ligand>
        <name>substrate</name>
    </ligand>
</feature>
<feature type="binding site" evidence="1">
    <location>
        <position position="30"/>
    </location>
    <ligand>
        <name>substrate</name>
    </ligand>
</feature>
<feature type="binding site" evidence="1">
    <location>
        <position position="34"/>
    </location>
    <ligand>
        <name>[4Fe-4S] cluster</name>
        <dbReference type="ChEBI" id="CHEBI:49883"/>
        <note>4Fe-4S-S-AdoMet</note>
    </ligand>
</feature>
<feature type="binding site" evidence="1">
    <location>
        <position position="38"/>
    </location>
    <ligand>
        <name>[4Fe-4S] cluster</name>
        <dbReference type="ChEBI" id="CHEBI:49883"/>
        <note>4Fe-4S-S-AdoMet</note>
    </ligand>
</feature>
<feature type="binding site" evidence="1">
    <location>
        <position position="41"/>
    </location>
    <ligand>
        <name>[4Fe-4S] cluster</name>
        <dbReference type="ChEBI" id="CHEBI:49883"/>
        <note>4Fe-4S-S-AdoMet</note>
    </ligand>
</feature>
<feature type="binding site" evidence="1">
    <location>
        <position position="43"/>
    </location>
    <ligand>
        <name>Mg(2+)</name>
        <dbReference type="ChEBI" id="CHEBI:18420"/>
    </ligand>
</feature>
<feature type="binding site" evidence="1">
    <location>
        <position position="96"/>
    </location>
    <ligand>
        <name>substrate</name>
    </ligand>
</feature>
<feature type="binding site" evidence="1">
    <location>
        <position position="98"/>
    </location>
    <ligand>
        <name>S-adenosyl-L-methionine</name>
        <dbReference type="ChEBI" id="CHEBI:59789"/>
    </ligand>
</feature>
<sequence length="250" mass="27879">MSKPGAELEEVFSSVQGEGMLIGLRQVFIRFRGCNLTCDYCDTPAGTPAEPCRIEQTPGRRDFVPADNPVSLDRVAALVEGWQRGWPGVHDSISITGGEPLLRHDILMQWLPVLREHLPVYLETNGVMHAALGLVINHVDIIGMDIKIPSTSGCTDLWDDHRQFLEIANTRRAFIKIVVGEETEDWEITRASEIIAGVNRDIPLILQPVTRAGDTLGIKPVKALELQELACRYLAEVRIIPQTHRFMGQL</sequence>